<comment type="function">
    <text evidence="1">Catalyzes the ATP-dependent conversion of 7-carboxy-7-deazaguanine (CDG) to 7-cyano-7-deazaguanine (preQ(0)).</text>
</comment>
<comment type="catalytic activity">
    <reaction evidence="1">
        <text>7-carboxy-7-deazaguanine + NH4(+) + ATP = 7-cyano-7-deazaguanine + ADP + phosphate + H2O + H(+)</text>
        <dbReference type="Rhea" id="RHEA:27982"/>
        <dbReference type="ChEBI" id="CHEBI:15377"/>
        <dbReference type="ChEBI" id="CHEBI:15378"/>
        <dbReference type="ChEBI" id="CHEBI:28938"/>
        <dbReference type="ChEBI" id="CHEBI:30616"/>
        <dbReference type="ChEBI" id="CHEBI:43474"/>
        <dbReference type="ChEBI" id="CHEBI:45075"/>
        <dbReference type="ChEBI" id="CHEBI:61036"/>
        <dbReference type="ChEBI" id="CHEBI:456216"/>
        <dbReference type="EC" id="6.3.4.20"/>
    </reaction>
</comment>
<comment type="cofactor">
    <cofactor evidence="1">
        <name>Zn(2+)</name>
        <dbReference type="ChEBI" id="CHEBI:29105"/>
    </cofactor>
    <text evidence="1">Binds 1 zinc ion per subunit.</text>
</comment>
<comment type="pathway">
    <text evidence="1">Purine metabolism; 7-cyano-7-deazaguanine biosynthesis.</text>
</comment>
<comment type="similarity">
    <text evidence="1">Belongs to the QueC family.</text>
</comment>
<protein>
    <recommendedName>
        <fullName evidence="1">7-cyano-7-deazaguanine synthase</fullName>
        <ecNumber evidence="1">6.3.4.20</ecNumber>
    </recommendedName>
    <alternativeName>
        <fullName evidence="1">7-cyano-7-carbaguanine synthase</fullName>
    </alternativeName>
    <alternativeName>
        <fullName evidence="1">PreQ(0) synthase</fullName>
    </alternativeName>
    <alternativeName>
        <fullName evidence="1">Queuosine biosynthesis protein QueC</fullName>
    </alternativeName>
</protein>
<evidence type="ECO:0000255" key="1">
    <source>
        <dbReference type="HAMAP-Rule" id="MF_01633"/>
    </source>
</evidence>
<reference key="1">
    <citation type="submission" date="2008-07" db="EMBL/GenBank/DDBJ databases">
        <title>Complete sequence of Geobacter bemidjiensis BEM.</title>
        <authorList>
            <consortium name="US DOE Joint Genome Institute"/>
            <person name="Lucas S."/>
            <person name="Copeland A."/>
            <person name="Lapidus A."/>
            <person name="Glavina del Rio T."/>
            <person name="Dalin E."/>
            <person name="Tice H."/>
            <person name="Bruce D."/>
            <person name="Goodwin L."/>
            <person name="Pitluck S."/>
            <person name="Kiss H."/>
            <person name="Brettin T."/>
            <person name="Detter J.C."/>
            <person name="Han C."/>
            <person name="Kuske C.R."/>
            <person name="Schmutz J."/>
            <person name="Larimer F."/>
            <person name="Land M."/>
            <person name="Hauser L."/>
            <person name="Kyrpides N."/>
            <person name="Lykidis A."/>
            <person name="Lovley D."/>
            <person name="Richardson P."/>
        </authorList>
    </citation>
    <scope>NUCLEOTIDE SEQUENCE [LARGE SCALE GENOMIC DNA]</scope>
    <source>
        <strain>ATCC BAA-1014 / DSM 16622 / JCM 12645 / Bem</strain>
    </source>
</reference>
<accession>B5EDQ7</accession>
<dbReference type="EC" id="6.3.4.20" evidence="1"/>
<dbReference type="EMBL" id="CP001124">
    <property type="protein sequence ID" value="ACH40685.1"/>
    <property type="molecule type" value="Genomic_DNA"/>
</dbReference>
<dbReference type="RefSeq" id="WP_012532123.1">
    <property type="nucleotide sequence ID" value="NC_011146.1"/>
</dbReference>
<dbReference type="SMR" id="B5EDQ7"/>
<dbReference type="STRING" id="404380.Gbem_3693"/>
<dbReference type="KEGG" id="gbm:Gbem_3693"/>
<dbReference type="eggNOG" id="COG0603">
    <property type="taxonomic scope" value="Bacteria"/>
</dbReference>
<dbReference type="HOGENOM" id="CLU_081854_1_1_7"/>
<dbReference type="OrthoDB" id="9789567at2"/>
<dbReference type="UniPathway" id="UPA00391"/>
<dbReference type="Proteomes" id="UP000008825">
    <property type="component" value="Chromosome"/>
</dbReference>
<dbReference type="GO" id="GO:0005524">
    <property type="term" value="F:ATP binding"/>
    <property type="evidence" value="ECO:0007669"/>
    <property type="project" value="UniProtKB-UniRule"/>
</dbReference>
<dbReference type="GO" id="GO:0016879">
    <property type="term" value="F:ligase activity, forming carbon-nitrogen bonds"/>
    <property type="evidence" value="ECO:0007669"/>
    <property type="project" value="UniProtKB-UniRule"/>
</dbReference>
<dbReference type="GO" id="GO:0008270">
    <property type="term" value="F:zinc ion binding"/>
    <property type="evidence" value="ECO:0007669"/>
    <property type="project" value="UniProtKB-UniRule"/>
</dbReference>
<dbReference type="GO" id="GO:0008616">
    <property type="term" value="P:queuosine biosynthetic process"/>
    <property type="evidence" value="ECO:0007669"/>
    <property type="project" value="UniProtKB-UniRule"/>
</dbReference>
<dbReference type="CDD" id="cd01995">
    <property type="entry name" value="QueC-like"/>
    <property type="match status" value="1"/>
</dbReference>
<dbReference type="FunFam" id="3.40.50.620:FF:000131">
    <property type="entry name" value="7-cyano-7-deazaguanine synthase"/>
    <property type="match status" value="1"/>
</dbReference>
<dbReference type="Gene3D" id="3.40.50.620">
    <property type="entry name" value="HUPs"/>
    <property type="match status" value="1"/>
</dbReference>
<dbReference type="HAMAP" id="MF_01633">
    <property type="entry name" value="QueC"/>
    <property type="match status" value="1"/>
</dbReference>
<dbReference type="InterPro" id="IPR018317">
    <property type="entry name" value="QueC"/>
</dbReference>
<dbReference type="InterPro" id="IPR014729">
    <property type="entry name" value="Rossmann-like_a/b/a_fold"/>
</dbReference>
<dbReference type="NCBIfam" id="TIGR00364">
    <property type="entry name" value="7-cyano-7-deazaguanine synthase QueC"/>
    <property type="match status" value="1"/>
</dbReference>
<dbReference type="PANTHER" id="PTHR42914">
    <property type="entry name" value="7-CYANO-7-DEAZAGUANINE SYNTHASE"/>
    <property type="match status" value="1"/>
</dbReference>
<dbReference type="PANTHER" id="PTHR42914:SF1">
    <property type="entry name" value="7-CYANO-7-DEAZAGUANINE SYNTHASE"/>
    <property type="match status" value="1"/>
</dbReference>
<dbReference type="Pfam" id="PF06508">
    <property type="entry name" value="QueC"/>
    <property type="match status" value="1"/>
</dbReference>
<dbReference type="PIRSF" id="PIRSF006293">
    <property type="entry name" value="ExsB"/>
    <property type="match status" value="1"/>
</dbReference>
<dbReference type="SUPFAM" id="SSF52402">
    <property type="entry name" value="Adenine nucleotide alpha hydrolases-like"/>
    <property type="match status" value="1"/>
</dbReference>
<feature type="chain" id="PRO_1000186601" description="7-cyano-7-deazaguanine synthase">
    <location>
        <begin position="1"/>
        <end position="225"/>
    </location>
</feature>
<feature type="binding site" evidence="1">
    <location>
        <begin position="9"/>
        <end position="19"/>
    </location>
    <ligand>
        <name>ATP</name>
        <dbReference type="ChEBI" id="CHEBI:30616"/>
    </ligand>
</feature>
<feature type="binding site" evidence="1">
    <location>
        <position position="188"/>
    </location>
    <ligand>
        <name>Zn(2+)</name>
        <dbReference type="ChEBI" id="CHEBI:29105"/>
    </ligand>
</feature>
<feature type="binding site" evidence="1">
    <location>
        <position position="198"/>
    </location>
    <ligand>
        <name>Zn(2+)</name>
        <dbReference type="ChEBI" id="CHEBI:29105"/>
    </ligand>
</feature>
<feature type="binding site" evidence="1">
    <location>
        <position position="201"/>
    </location>
    <ligand>
        <name>Zn(2+)</name>
        <dbReference type="ChEBI" id="CHEBI:29105"/>
    </ligand>
</feature>
<feature type="binding site" evidence="1">
    <location>
        <position position="204"/>
    </location>
    <ligand>
        <name>Zn(2+)</name>
        <dbReference type="ChEBI" id="CHEBI:29105"/>
    </ligand>
</feature>
<keyword id="KW-0067">ATP-binding</keyword>
<keyword id="KW-0436">Ligase</keyword>
<keyword id="KW-0479">Metal-binding</keyword>
<keyword id="KW-0547">Nucleotide-binding</keyword>
<keyword id="KW-0671">Queuosine biosynthesis</keyword>
<keyword id="KW-1185">Reference proteome</keyword>
<keyword id="KW-0862">Zinc</keyword>
<proteinExistence type="inferred from homology"/>
<name>QUEC_CITBB</name>
<sequence length="225" mass="24499">MQKKAVILYSGGLDSTTCLAIAKEQGFAPYALSFSYGQRHQQELEVAKLNARPMGAVDHLLVEFDLRKMGGSALTSDIEVPKEGVGEEIPVTYVPARNTIFLSFALGWAETLDCFDIFIGVNALDYSGYPDCRPEFISAYETMANLATKAGVEGKRLKIHTPLISLTKAEIIQKGLSLGVDYSKTHSCYDPAEDGAACGRCDSCRLRLKGFAEAGVTDPVKYQKL</sequence>
<organism>
    <name type="scientific">Citrifermentans bemidjiense (strain ATCC BAA-1014 / DSM 16622 / JCM 12645 / Bem)</name>
    <name type="common">Geobacter bemidjiensis</name>
    <dbReference type="NCBI Taxonomy" id="404380"/>
    <lineage>
        <taxon>Bacteria</taxon>
        <taxon>Pseudomonadati</taxon>
        <taxon>Thermodesulfobacteriota</taxon>
        <taxon>Desulfuromonadia</taxon>
        <taxon>Geobacterales</taxon>
        <taxon>Geobacteraceae</taxon>
        <taxon>Citrifermentans</taxon>
    </lineage>
</organism>
<gene>
    <name evidence="1" type="primary">queC</name>
    <name type="ordered locus">Gbem_3693</name>
</gene>